<accession>Q9H2R5</accession>
<accession>A0AUY8</accession>
<accession>Q15358</accession>
<accession>Q6ISI0</accession>
<accession>Q9H2R3</accession>
<accession>Q9H2R4</accession>
<accession>Q9H2R6</accession>
<accession>Q9HBG9</accession>
<proteinExistence type="evidence at protein level"/>
<comment type="function">
    <text>Protease whose physiological substrate is not yet known.</text>
</comment>
<comment type="interaction">
    <interactant intactId="EBI-8645371">
        <id>Q9H2R5</id>
    </interactant>
    <interactant intactId="EBI-1176455">
        <id>P63172</id>
        <label>DYNLT1</label>
    </interactant>
    <organismsDiffer>false</organismsDiffer>
    <experiments>3</experiments>
</comment>
<comment type="interaction">
    <interactant intactId="EBI-8645371">
        <id>Q9H2R5</id>
    </interactant>
    <interactant intactId="EBI-742327">
        <id>Q15654</id>
        <label>TRIP6</label>
    </interactant>
    <organismsDiffer>false</organismsDiffer>
    <experiments>3</experiments>
</comment>
<comment type="subcellular location">
    <subcellularLocation>
        <location evidence="7">Secreted</location>
    </subcellularLocation>
</comment>
<comment type="alternative products">
    <event type="alternative splicing"/>
    <isoform>
        <id>Q9H2R5-1</id>
        <name>1</name>
        <sequence type="displayed"/>
    </isoform>
    <isoform>
        <id>Q9H2R5-2</id>
        <name>2</name>
        <sequence type="described" ref="VSP_005405"/>
    </isoform>
    <isoform>
        <id>Q9H2R5-3</id>
        <name>3</name>
        <sequence type="described" ref="VSP_005406 VSP_005407"/>
    </isoform>
    <isoform>
        <id>Q9H2R5-4</id>
        <name>4</name>
        <sequence type="described" ref="VSP_005404"/>
    </isoform>
    <isoform>
        <id>Q9H2R5-5</id>
        <name>5</name>
        <sequence type="described" ref="VSP_054621"/>
    </isoform>
</comment>
<comment type="tissue specificity">
    <text evidence="4">Highest expression in the thyroid gland. Also expressed in the prostate, salivary, and adrenal glands and in the colon testis and kidney.</text>
</comment>
<comment type="miscellaneous">
    <molecule>Isoform 2</molecule>
    <text evidence="7">May be produced at very low levels due to a premature stop codon in the mRNA, leading to nonsense-mediated mRNA decay.</text>
</comment>
<comment type="similarity">
    <text evidence="3">Belongs to the peptidase S1 family. Kallikrein subfamily.</text>
</comment>
<keyword id="KW-0025">Alternative splicing</keyword>
<keyword id="KW-1015">Disulfide bond</keyword>
<keyword id="KW-0325">Glycoprotein</keyword>
<keyword id="KW-0378">Hydrolase</keyword>
<keyword id="KW-0645">Protease</keyword>
<keyword id="KW-1267">Proteomics identification</keyword>
<keyword id="KW-1185">Reference proteome</keyword>
<keyword id="KW-0964">Secreted</keyword>
<keyword id="KW-0720">Serine protease</keyword>
<keyword id="KW-0732">Signal</keyword>
<keyword id="KW-0865">Zymogen</keyword>
<gene>
    <name type="primary">KLK15</name>
</gene>
<reference key="1">
    <citation type="journal article" date="2001" name="J. Biol. Chem.">
        <title>Molecular cloning of the human kallikrein 15 gene (KLK15). Up-regulation in prostate cancer.</title>
        <authorList>
            <person name="Yousef G.M."/>
            <person name="Scorilas A."/>
            <person name="Jung K."/>
            <person name="Ashworth L.K."/>
            <person name="Diamandis E.P."/>
        </authorList>
    </citation>
    <scope>NUCLEOTIDE SEQUENCE [GENOMIC DNA]</scope>
    <scope>ALTERNATIVE SPLICING</scope>
    <scope>TISSUE SPECIFICITY</scope>
</reference>
<reference key="2">
    <citation type="journal article" date="2000" name="Gene">
        <title>Sequencing and expression analysis of the serine protease gene cluster located in chromosome 19q13 region.</title>
        <authorList>
            <person name="Gan L."/>
            <person name="Lee I."/>
            <person name="Smith R."/>
            <person name="Argonza-Barrett R."/>
            <person name="Lei H."/>
            <person name="McCuaig J."/>
            <person name="Moss P."/>
            <person name="Paeper B."/>
            <person name="Wang K."/>
        </authorList>
    </citation>
    <scope>NUCLEOTIDE SEQUENCE [GENOMIC DNA]</scope>
</reference>
<reference key="3">
    <citation type="journal article" date="1994" name="Biochim. Biophys. Acta">
        <title>A novel serine proteinase-like sequence from human brain.</title>
        <authorList>
            <person name="Dihanich M.E."/>
            <person name="Spiess M."/>
        </authorList>
    </citation>
    <scope>PRELIMINARY PARTIAL NUCLEOTIDE SEQUENCE [MRNA]</scope>
    <source>
        <tissue>Brain</tissue>
    </source>
</reference>
<reference key="4">
    <citation type="submission" date="2005-07" db="EMBL/GenBank/DDBJ databases">
        <authorList>
            <person name="Mural R.J."/>
            <person name="Istrail S."/>
            <person name="Sutton G."/>
            <person name="Florea L."/>
            <person name="Halpern A.L."/>
            <person name="Mobarry C.M."/>
            <person name="Lippert R."/>
            <person name="Walenz B."/>
            <person name="Shatkay H."/>
            <person name="Dew I."/>
            <person name="Miller J.R."/>
            <person name="Flanigan M.J."/>
            <person name="Edwards N.J."/>
            <person name="Bolanos R."/>
            <person name="Fasulo D."/>
            <person name="Halldorsson B.V."/>
            <person name="Hannenhalli S."/>
            <person name="Turner R."/>
            <person name="Yooseph S."/>
            <person name="Lu F."/>
            <person name="Nusskern D.R."/>
            <person name="Shue B.C."/>
            <person name="Zheng X.H."/>
            <person name="Zhong F."/>
            <person name="Delcher A.L."/>
            <person name="Huson D.H."/>
            <person name="Kravitz S.A."/>
            <person name="Mouchard L."/>
            <person name="Reinert K."/>
            <person name="Remington K.A."/>
            <person name="Clark A.G."/>
            <person name="Waterman M.S."/>
            <person name="Eichler E.E."/>
            <person name="Adams M.D."/>
            <person name="Hunkapiller M.W."/>
            <person name="Myers E.W."/>
            <person name="Venter J.C."/>
        </authorList>
    </citation>
    <scope>NUCLEOTIDE SEQUENCE [LARGE SCALE GENOMIC DNA]</scope>
</reference>
<reference key="5">
    <citation type="journal article" date="2004" name="Genome Res.">
        <title>The status, quality, and expansion of the NIH full-length cDNA project: the Mammalian Gene Collection (MGC).</title>
        <authorList>
            <consortium name="The MGC Project Team"/>
        </authorList>
    </citation>
    <scope>NUCLEOTIDE SEQUENCE [LARGE SCALE MRNA] (ISOFORMS 1 AND 5)</scope>
</reference>
<reference key="6">
    <citation type="journal article" date="2004" name="Genome Biol.">
        <title>An unappreciated role for RNA surveillance.</title>
        <authorList>
            <person name="Hillman R.T."/>
            <person name="Green R.E."/>
            <person name="Brenner S.E."/>
        </authorList>
    </citation>
    <scope>SPLICE ISOFORM(S) THAT ARE POTENTIAL NMD TARGET(S)</scope>
</reference>
<reference key="7">
    <citation type="journal article" date="2006" name="Science">
        <title>The consensus coding sequences of human breast and colorectal cancers.</title>
        <authorList>
            <person name="Sjoeblom T."/>
            <person name="Jones S."/>
            <person name="Wood L.D."/>
            <person name="Parsons D.W."/>
            <person name="Lin J."/>
            <person name="Barber T.D."/>
            <person name="Mandelker D."/>
            <person name="Leary R.J."/>
            <person name="Ptak J."/>
            <person name="Silliman N."/>
            <person name="Szabo S."/>
            <person name="Buckhaults P."/>
            <person name="Farrell C."/>
            <person name="Meeh P."/>
            <person name="Markowitz S.D."/>
            <person name="Willis J."/>
            <person name="Dawson D."/>
            <person name="Willson J.K.V."/>
            <person name="Gazdar A.F."/>
            <person name="Hartigan J."/>
            <person name="Wu L."/>
            <person name="Liu C."/>
            <person name="Parmigiani G."/>
            <person name="Park B.H."/>
            <person name="Bachman K.E."/>
            <person name="Papadopoulos N."/>
            <person name="Vogelstein B."/>
            <person name="Kinzler K.W."/>
            <person name="Velculescu V.E."/>
        </authorList>
    </citation>
    <scope>VARIANT [LARGE SCALE ANALYSIS] THR-137</scope>
</reference>
<feature type="signal peptide" evidence="2">
    <location>
        <begin position="1"/>
        <end position="16"/>
    </location>
</feature>
<feature type="propeptide" id="PRO_0000027960" description="Activation peptide" evidence="2">
    <location>
        <begin position="17"/>
        <end position="21"/>
    </location>
</feature>
<feature type="chain" id="PRO_0000027961" description="Kallikrein-15">
    <location>
        <begin position="22"/>
        <end position="256"/>
    </location>
</feature>
<feature type="domain" description="Peptidase S1" evidence="3">
    <location>
        <begin position="22"/>
        <end position="254"/>
    </location>
</feature>
<feature type="active site" description="Charge relay system" evidence="1">
    <location>
        <position position="62"/>
    </location>
</feature>
<feature type="active site" description="Charge relay system" evidence="1">
    <location>
        <position position="106"/>
    </location>
</feature>
<feature type="active site" description="Charge relay system" evidence="1">
    <location>
        <position position="209"/>
    </location>
</feature>
<feature type="glycosylation site" description="N-linked (GlcNAc...) asparagine" evidence="2">
    <location>
        <position position="171"/>
    </location>
</feature>
<feature type="glycosylation site" description="N-linked (GlcNAc...) asparagine" evidence="2">
    <location>
        <position position="232"/>
    </location>
</feature>
<feature type="disulfide bond" evidence="3">
    <location>
        <begin position="47"/>
        <end position="63"/>
    </location>
</feature>
<feature type="disulfide bond" evidence="3">
    <location>
        <begin position="138"/>
        <end position="215"/>
    </location>
</feature>
<feature type="disulfide bond" evidence="3">
    <location>
        <begin position="180"/>
        <end position="194"/>
    </location>
</feature>
<feature type="disulfide bond" evidence="3">
    <location>
        <begin position="205"/>
        <end position="230"/>
    </location>
</feature>
<feature type="splice variant" id="VSP_054621" description="In isoform 5." evidence="6">
    <location>
        <position position="15"/>
    </location>
</feature>
<feature type="splice variant" id="VSP_005405" description="In isoform 2." evidence="7">
    <location>
        <begin position="122"/>
        <end position="256"/>
    </location>
</feature>
<feature type="splice variant" id="VSP_005404" description="In isoform 4." evidence="7">
    <location>
        <begin position="122"/>
        <end position="206"/>
    </location>
</feature>
<feature type="splice variant" id="VSP_005406" description="In isoform 3." evidence="7">
    <original>V</original>
    <variation>G</variation>
    <location>
        <position position="161"/>
    </location>
</feature>
<feature type="splice variant" id="VSP_005407" description="In isoform 3." evidence="7">
    <location>
        <begin position="162"/>
        <end position="256"/>
    </location>
</feature>
<feature type="sequence variant" id="VAR_020179" description="In dbSNP:rs3212805.">
    <original>P</original>
    <variation>L</variation>
    <location>
        <position position="134"/>
    </location>
</feature>
<feature type="sequence variant" id="VAR_036298" description="In a breast cancer sample; somatic mutation." evidence="5">
    <original>A</original>
    <variation>T</variation>
    <location>
        <position position="137"/>
    </location>
</feature>
<feature type="sequence conflict" description="In Ref. 2." evidence="7" ref="2">
    <original>SHNEPGTAGSPRSQ</original>
    <variation>PLSSP</variation>
    <location>
        <begin position="147"/>
        <end position="160"/>
    </location>
</feature>
<protein>
    <recommendedName>
        <fullName>Kallikrein-15</fullName>
        <ecNumber>3.4.21.-</ecNumber>
    </recommendedName>
    <alternativeName>
        <fullName>ACO protease</fullName>
    </alternativeName>
</protein>
<dbReference type="EC" id="3.4.21.-"/>
<dbReference type="EMBL" id="AF242195">
    <property type="protein sequence ID" value="AAG09469.1"/>
    <property type="molecule type" value="Genomic_DNA"/>
</dbReference>
<dbReference type="EMBL" id="AF242195">
    <property type="protein sequence ID" value="AAG09470.1"/>
    <property type="molecule type" value="Genomic_DNA"/>
</dbReference>
<dbReference type="EMBL" id="AF242195">
    <property type="protein sequence ID" value="AAG09471.1"/>
    <property type="molecule type" value="Genomic_DNA"/>
</dbReference>
<dbReference type="EMBL" id="AF242195">
    <property type="protein sequence ID" value="AAG09472.1"/>
    <property type="molecule type" value="Genomic_DNA"/>
</dbReference>
<dbReference type="EMBL" id="AF243527">
    <property type="protein sequence ID" value="AAG33354.1"/>
    <property type="molecule type" value="Genomic_DNA"/>
</dbReference>
<dbReference type="EMBL" id="X75363">
    <property type="protein sequence ID" value="CAA53145.1"/>
    <property type="status" value="ALT_SEQ"/>
    <property type="molecule type" value="mRNA"/>
</dbReference>
<dbReference type="EMBL" id="CH471135">
    <property type="protein sequence ID" value="EAW71918.1"/>
    <property type="molecule type" value="Genomic_DNA"/>
</dbReference>
<dbReference type="EMBL" id="BC069480">
    <property type="protein sequence ID" value="AAH69480.1"/>
    <property type="molecule type" value="mRNA"/>
</dbReference>
<dbReference type="EMBL" id="BC069507">
    <property type="protein sequence ID" value="AAH69507.1"/>
    <property type="molecule type" value="mRNA"/>
</dbReference>
<dbReference type="EMBL" id="BC069518">
    <property type="protein sequence ID" value="AAH69518.1"/>
    <property type="molecule type" value="mRNA"/>
</dbReference>
<dbReference type="EMBL" id="BC126137">
    <property type="protein sequence ID" value="AAI26138.1"/>
    <property type="molecule type" value="mRNA"/>
</dbReference>
<dbReference type="EMBL" id="BC144046">
    <property type="protein sequence ID" value="AAI44047.1"/>
    <property type="molecule type" value="mRNA"/>
</dbReference>
<dbReference type="CCDS" id="CCDS12805.1">
    <molecule id="Q9H2R5-1"/>
</dbReference>
<dbReference type="CCDS" id="CCDS62766.1">
    <molecule id="Q9H2R5-5"/>
</dbReference>
<dbReference type="PIR" id="S45356">
    <property type="entry name" value="S45356"/>
</dbReference>
<dbReference type="RefSeq" id="NP_001264010.1">
    <molecule id="Q9H2R5-5"/>
    <property type="nucleotide sequence ID" value="NM_001277081.2"/>
</dbReference>
<dbReference type="RefSeq" id="NP_001264011.1">
    <property type="nucleotide sequence ID" value="NM_001277082.1"/>
</dbReference>
<dbReference type="RefSeq" id="NP_059979.2">
    <molecule id="Q9H2R5-1"/>
    <property type="nucleotide sequence ID" value="NM_017509.3"/>
</dbReference>
<dbReference type="RefSeq" id="XP_006723328.1">
    <property type="nucleotide sequence ID" value="XM_006723265.3"/>
</dbReference>
<dbReference type="RefSeq" id="XP_011525387.1">
    <property type="nucleotide sequence ID" value="XM_011527085.2"/>
</dbReference>
<dbReference type="RefSeq" id="XP_011525389.1">
    <molecule id="Q9H2R5-4"/>
    <property type="nucleotide sequence ID" value="XM_011527087.3"/>
</dbReference>
<dbReference type="RefSeq" id="XP_011525390.1">
    <molecule id="Q9H2R5-3"/>
    <property type="nucleotide sequence ID" value="XM_011527088.3"/>
</dbReference>
<dbReference type="RefSeq" id="XP_016882432.1">
    <molecule id="Q9H2R5-2"/>
    <property type="nucleotide sequence ID" value="XM_017026943.2"/>
</dbReference>
<dbReference type="RefSeq" id="XP_054177374.1">
    <molecule id="Q9H2R5-4"/>
    <property type="nucleotide sequence ID" value="XM_054321399.1"/>
</dbReference>
<dbReference type="RefSeq" id="XP_054177376.1">
    <molecule id="Q9H2R5-3"/>
    <property type="nucleotide sequence ID" value="XM_054321401.1"/>
</dbReference>
<dbReference type="RefSeq" id="XP_054177377.1">
    <molecule id="Q9H2R5-2"/>
    <property type="nucleotide sequence ID" value="XM_054321402.1"/>
</dbReference>
<dbReference type="SMR" id="Q9H2R5"/>
<dbReference type="BioGRID" id="120715">
    <property type="interactions" value="187"/>
</dbReference>
<dbReference type="FunCoup" id="Q9H2R5">
    <property type="interactions" value="52"/>
</dbReference>
<dbReference type="IntAct" id="Q9H2R5">
    <property type="interactions" value="146"/>
</dbReference>
<dbReference type="MINT" id="Q9H2R5"/>
<dbReference type="STRING" id="9606.ENSP00000469315"/>
<dbReference type="MEROPS" id="S01.081"/>
<dbReference type="GlyCosmos" id="Q9H2R5">
    <property type="glycosylation" value="2 sites, No reported glycans"/>
</dbReference>
<dbReference type="GlyGen" id="Q9H2R5">
    <property type="glycosylation" value="2 sites"/>
</dbReference>
<dbReference type="iPTMnet" id="Q9H2R5"/>
<dbReference type="PhosphoSitePlus" id="Q9H2R5"/>
<dbReference type="BioMuta" id="KLK15"/>
<dbReference type="DMDM" id="18202940"/>
<dbReference type="jPOST" id="Q9H2R5"/>
<dbReference type="MassIVE" id="Q9H2R5"/>
<dbReference type="PaxDb" id="9606-ENSP00000469315"/>
<dbReference type="PeptideAtlas" id="Q9H2R5"/>
<dbReference type="ProteomicsDB" id="80579">
    <molecule id="Q9H2R5-1"/>
</dbReference>
<dbReference type="Antibodypedia" id="18915">
    <property type="antibodies" value="245 antibodies from 28 providers"/>
</dbReference>
<dbReference type="DNASU" id="55554"/>
<dbReference type="Ensembl" id="ENST00000326856.8">
    <molecule id="Q9H2R5-5"/>
    <property type="protein sequence ID" value="ENSP00000314783.4"/>
    <property type="gene ID" value="ENSG00000174562.14"/>
</dbReference>
<dbReference type="Ensembl" id="ENST00000598239.6">
    <molecule id="Q9H2R5-1"/>
    <property type="protein sequence ID" value="ENSP00000469315.1"/>
    <property type="gene ID" value="ENSG00000174562.14"/>
</dbReference>
<dbReference type="Ensembl" id="ENST00000695965.1">
    <molecule id="Q9H2R5-4"/>
    <property type="protein sequence ID" value="ENSP00000512291.1"/>
    <property type="gene ID" value="ENSG00000174562.14"/>
</dbReference>
<dbReference type="Ensembl" id="ENST00000695998.1">
    <molecule id="Q9H2R5-5"/>
    <property type="protein sequence ID" value="ENSP00000512319.1"/>
    <property type="gene ID" value="ENSG00000174562.14"/>
</dbReference>
<dbReference type="GeneID" id="55554"/>
<dbReference type="KEGG" id="hsa:55554"/>
<dbReference type="MANE-Select" id="ENST00000598239.6">
    <property type="protein sequence ID" value="ENSP00000469315.1"/>
    <property type="RefSeq nucleotide sequence ID" value="NM_017509.4"/>
    <property type="RefSeq protein sequence ID" value="NP_059979.2"/>
</dbReference>
<dbReference type="UCSC" id="uc002ptl.4">
    <molecule id="Q9H2R5-1"/>
    <property type="organism name" value="human"/>
</dbReference>
<dbReference type="AGR" id="HGNC:20453"/>
<dbReference type="CTD" id="55554"/>
<dbReference type="DisGeNET" id="55554"/>
<dbReference type="GeneCards" id="KLK15"/>
<dbReference type="HGNC" id="HGNC:20453">
    <property type="gene designation" value="KLK15"/>
</dbReference>
<dbReference type="HPA" id="ENSG00000174562">
    <property type="expression patterns" value="Tissue enhanced (intestine, salivary gland, testis)"/>
</dbReference>
<dbReference type="MIM" id="610601">
    <property type="type" value="gene"/>
</dbReference>
<dbReference type="neXtProt" id="NX_Q9H2R5"/>
<dbReference type="OpenTargets" id="ENSG00000174562"/>
<dbReference type="PharmGKB" id="PA134977502"/>
<dbReference type="VEuPathDB" id="HostDB:ENSG00000174562"/>
<dbReference type="eggNOG" id="KOG3627">
    <property type="taxonomic scope" value="Eukaryota"/>
</dbReference>
<dbReference type="GeneTree" id="ENSGT00940000162074"/>
<dbReference type="HOGENOM" id="CLU_006842_1_1_1"/>
<dbReference type="InParanoid" id="Q9H2R5"/>
<dbReference type="OMA" id="IISDASC"/>
<dbReference type="OrthoDB" id="10059102at2759"/>
<dbReference type="PAN-GO" id="Q9H2R5">
    <property type="GO annotations" value="1 GO annotation based on evolutionary models"/>
</dbReference>
<dbReference type="PhylomeDB" id="Q9H2R5"/>
<dbReference type="TreeFam" id="TF331065"/>
<dbReference type="BRENDA" id="3.4.21.35">
    <property type="organism ID" value="2681"/>
</dbReference>
<dbReference type="PathwayCommons" id="Q9H2R5"/>
<dbReference type="SignaLink" id="Q9H2R5"/>
<dbReference type="BioGRID-ORCS" id="55554">
    <property type="hits" value="14 hits in 1149 CRISPR screens"/>
</dbReference>
<dbReference type="ChiTaRS" id="KLK15">
    <property type="organism name" value="human"/>
</dbReference>
<dbReference type="GeneWiki" id="KLK15"/>
<dbReference type="GenomeRNAi" id="55554"/>
<dbReference type="Pharos" id="Q9H2R5">
    <property type="development level" value="Tbio"/>
</dbReference>
<dbReference type="PRO" id="PR:Q9H2R5"/>
<dbReference type="Proteomes" id="UP000005640">
    <property type="component" value="Chromosome 19"/>
</dbReference>
<dbReference type="RNAct" id="Q9H2R5">
    <property type="molecule type" value="protein"/>
</dbReference>
<dbReference type="Bgee" id="ENSG00000174562">
    <property type="expression patterns" value="Expressed in vena cava and 77 other cell types or tissues"/>
</dbReference>
<dbReference type="ExpressionAtlas" id="Q9H2R5">
    <property type="expression patterns" value="baseline and differential"/>
</dbReference>
<dbReference type="GO" id="GO:0005615">
    <property type="term" value="C:extracellular space"/>
    <property type="evidence" value="ECO:0000318"/>
    <property type="project" value="GO_Central"/>
</dbReference>
<dbReference type="GO" id="GO:0030141">
    <property type="term" value="C:secretory granule"/>
    <property type="evidence" value="ECO:0000318"/>
    <property type="project" value="GO_Central"/>
</dbReference>
<dbReference type="GO" id="GO:0004252">
    <property type="term" value="F:serine-type endopeptidase activity"/>
    <property type="evidence" value="ECO:0000318"/>
    <property type="project" value="GO_Central"/>
</dbReference>
<dbReference type="GO" id="GO:0008236">
    <property type="term" value="F:serine-type peptidase activity"/>
    <property type="evidence" value="ECO:0000304"/>
    <property type="project" value="ProtInc"/>
</dbReference>
<dbReference type="GO" id="GO:0051604">
    <property type="term" value="P:protein maturation"/>
    <property type="evidence" value="ECO:0000318"/>
    <property type="project" value="GO_Central"/>
</dbReference>
<dbReference type="GO" id="GO:0006508">
    <property type="term" value="P:proteolysis"/>
    <property type="evidence" value="ECO:0007669"/>
    <property type="project" value="UniProtKB-KW"/>
</dbReference>
<dbReference type="CDD" id="cd00190">
    <property type="entry name" value="Tryp_SPc"/>
    <property type="match status" value="1"/>
</dbReference>
<dbReference type="FunFam" id="2.40.10.10:FF:000010">
    <property type="entry name" value="Kallikrein related peptidase 11"/>
    <property type="match status" value="1"/>
</dbReference>
<dbReference type="FunFam" id="2.40.10.10:FF:000056">
    <property type="entry name" value="Kallikrein related peptidase 11"/>
    <property type="match status" value="1"/>
</dbReference>
<dbReference type="Gene3D" id="2.40.10.10">
    <property type="entry name" value="Trypsin-like serine proteases"/>
    <property type="match status" value="2"/>
</dbReference>
<dbReference type="InterPro" id="IPR009003">
    <property type="entry name" value="Peptidase_S1_PA"/>
</dbReference>
<dbReference type="InterPro" id="IPR043504">
    <property type="entry name" value="Peptidase_S1_PA_chymotrypsin"/>
</dbReference>
<dbReference type="InterPro" id="IPR001314">
    <property type="entry name" value="Peptidase_S1A"/>
</dbReference>
<dbReference type="InterPro" id="IPR001254">
    <property type="entry name" value="Trypsin_dom"/>
</dbReference>
<dbReference type="InterPro" id="IPR018114">
    <property type="entry name" value="TRYPSIN_HIS"/>
</dbReference>
<dbReference type="PANTHER" id="PTHR24271:SF60">
    <property type="entry name" value="KALLIKREIN-15"/>
    <property type="match status" value="1"/>
</dbReference>
<dbReference type="PANTHER" id="PTHR24271">
    <property type="entry name" value="KALLIKREIN-RELATED"/>
    <property type="match status" value="1"/>
</dbReference>
<dbReference type="Pfam" id="PF00089">
    <property type="entry name" value="Trypsin"/>
    <property type="match status" value="1"/>
</dbReference>
<dbReference type="PRINTS" id="PR00722">
    <property type="entry name" value="CHYMOTRYPSIN"/>
</dbReference>
<dbReference type="SMART" id="SM00020">
    <property type="entry name" value="Tryp_SPc"/>
    <property type="match status" value="1"/>
</dbReference>
<dbReference type="SUPFAM" id="SSF50494">
    <property type="entry name" value="Trypsin-like serine proteases"/>
    <property type="match status" value="1"/>
</dbReference>
<dbReference type="PROSITE" id="PS50240">
    <property type="entry name" value="TRYPSIN_DOM"/>
    <property type="match status" value="1"/>
</dbReference>
<dbReference type="PROSITE" id="PS00134">
    <property type="entry name" value="TRYPSIN_HIS"/>
    <property type="match status" value="1"/>
</dbReference>
<name>KLK15_HUMAN</name>
<organism>
    <name type="scientific">Homo sapiens</name>
    <name type="common">Human</name>
    <dbReference type="NCBI Taxonomy" id="9606"/>
    <lineage>
        <taxon>Eukaryota</taxon>
        <taxon>Metazoa</taxon>
        <taxon>Chordata</taxon>
        <taxon>Craniata</taxon>
        <taxon>Vertebrata</taxon>
        <taxon>Euteleostomi</taxon>
        <taxon>Mammalia</taxon>
        <taxon>Eutheria</taxon>
        <taxon>Euarchontoglires</taxon>
        <taxon>Primates</taxon>
        <taxon>Haplorrhini</taxon>
        <taxon>Catarrhini</taxon>
        <taxon>Hominidae</taxon>
        <taxon>Homo</taxon>
    </lineage>
</organism>
<evidence type="ECO:0000250" key="1"/>
<evidence type="ECO:0000255" key="2"/>
<evidence type="ECO:0000255" key="3">
    <source>
        <dbReference type="PROSITE-ProRule" id="PRU00274"/>
    </source>
</evidence>
<evidence type="ECO:0000269" key="4">
    <source>
    </source>
</evidence>
<evidence type="ECO:0000269" key="5">
    <source>
    </source>
</evidence>
<evidence type="ECO:0000303" key="6">
    <source>
    </source>
</evidence>
<evidence type="ECO:0000305" key="7"/>
<sequence>MWLLLTLSFLLASTAAQDGDKLLEGDECAPHSQPWQVALYERGRFNCGASLISPHWVLSAAHCQSRFMRVRLGEHNLRKRDGPEQLRTTSRVIPHPRYEARSHRNDIMLLRLVQPARLNPQVRPAVLPTRCPHPGEACVVSGWGLVSHNEPGTAGSPRSQVSLPDTLHCANISIISDTSCDKSYPGRLTNTMVCAGAEGRGAESCEGDSGGPLVCGGILQGIVSWGDVPCDNTTKPGVYTKVCHYLEWIRETMKRN</sequence>